<sequence length="128" mass="13552">MLPFYFLSVATNAAIGFILTVLDSQEESAHDCPFLYDATFSLVLALLSGIAAVCKCVNPIGAQLPVLGDLIPTLAGGTGCALFLHRYCVALSKPSPIPRTLVQYAKPLGLFSLAASILHLLFAPTLFL</sequence>
<evidence type="ECO:0000255" key="1"/>
<evidence type="ECO:0000305" key="2"/>
<name>Y070_TREPA</name>
<accession>O83109</accession>
<proteinExistence type="predicted"/>
<dbReference type="EMBL" id="AE000520">
    <property type="protein sequence ID" value="AAC65067.1"/>
    <property type="molecule type" value="Genomic_DNA"/>
</dbReference>
<dbReference type="PIR" id="F71371">
    <property type="entry name" value="F71371"/>
</dbReference>
<dbReference type="RefSeq" id="WP_010881519.1">
    <property type="nucleotide sequence ID" value="NC_021490.2"/>
</dbReference>
<dbReference type="IntAct" id="O83109">
    <property type="interactions" value="3"/>
</dbReference>
<dbReference type="STRING" id="243276.TP_0070"/>
<dbReference type="EnsemblBacteria" id="AAC65067">
    <property type="protein sequence ID" value="AAC65067"/>
    <property type="gene ID" value="TP_0070"/>
</dbReference>
<dbReference type="KEGG" id="tpa:TP_0070"/>
<dbReference type="KEGG" id="tpw:TPANIC_0070"/>
<dbReference type="eggNOG" id="ENOG502ZJPR">
    <property type="taxonomic scope" value="Bacteria"/>
</dbReference>
<dbReference type="HOGENOM" id="CLU_154627_0_0_12"/>
<dbReference type="OrthoDB" id="360449at2"/>
<dbReference type="Proteomes" id="UP000000811">
    <property type="component" value="Chromosome"/>
</dbReference>
<dbReference type="GO" id="GO:0005886">
    <property type="term" value="C:plasma membrane"/>
    <property type="evidence" value="ECO:0007669"/>
    <property type="project" value="UniProtKB-SubCell"/>
</dbReference>
<feature type="chain" id="PRO_0000202186" description="Uncharacterized protein TP_0070">
    <location>
        <begin position="1"/>
        <end position="128"/>
    </location>
</feature>
<feature type="transmembrane region" description="Helical" evidence="1">
    <location>
        <begin position="2"/>
        <end position="22"/>
    </location>
</feature>
<feature type="transmembrane region" description="Helical" evidence="1">
    <location>
        <begin position="34"/>
        <end position="54"/>
    </location>
</feature>
<feature type="transmembrane region" description="Helical" evidence="1">
    <location>
        <begin position="64"/>
        <end position="84"/>
    </location>
</feature>
<feature type="transmembrane region" description="Helical" evidence="1">
    <location>
        <begin position="108"/>
        <end position="128"/>
    </location>
</feature>
<reference key="1">
    <citation type="journal article" date="1998" name="Science">
        <title>Complete genome sequence of Treponema pallidum, the syphilis spirochete.</title>
        <authorList>
            <person name="Fraser C.M."/>
            <person name="Norris S.J."/>
            <person name="Weinstock G.M."/>
            <person name="White O."/>
            <person name="Sutton G.G."/>
            <person name="Dodson R.J."/>
            <person name="Gwinn M.L."/>
            <person name="Hickey E.K."/>
            <person name="Clayton R.A."/>
            <person name="Ketchum K.A."/>
            <person name="Sodergren E."/>
            <person name="Hardham J.M."/>
            <person name="McLeod M.P."/>
            <person name="Salzberg S.L."/>
            <person name="Peterson J.D."/>
            <person name="Khalak H.G."/>
            <person name="Richardson D.L."/>
            <person name="Howell J.K."/>
            <person name="Chidambaram M."/>
            <person name="Utterback T.R."/>
            <person name="McDonald L.A."/>
            <person name="Artiach P."/>
            <person name="Bowman C."/>
            <person name="Cotton M.D."/>
            <person name="Fujii C."/>
            <person name="Garland S.A."/>
            <person name="Hatch B."/>
            <person name="Horst K."/>
            <person name="Roberts K.M."/>
            <person name="Sandusky M."/>
            <person name="Weidman J.F."/>
            <person name="Smith H.O."/>
            <person name="Venter J.C."/>
        </authorList>
    </citation>
    <scope>NUCLEOTIDE SEQUENCE [LARGE SCALE GENOMIC DNA]</scope>
    <source>
        <strain>Nichols</strain>
    </source>
</reference>
<comment type="subcellular location">
    <subcellularLocation>
        <location evidence="2">Cell membrane</location>
        <topology evidence="2">Multi-pass membrane protein</topology>
    </subcellularLocation>
</comment>
<protein>
    <recommendedName>
        <fullName>Uncharacterized protein TP_0070</fullName>
    </recommendedName>
</protein>
<organism>
    <name type="scientific">Treponema pallidum (strain Nichols)</name>
    <dbReference type="NCBI Taxonomy" id="243276"/>
    <lineage>
        <taxon>Bacteria</taxon>
        <taxon>Pseudomonadati</taxon>
        <taxon>Spirochaetota</taxon>
        <taxon>Spirochaetia</taxon>
        <taxon>Spirochaetales</taxon>
        <taxon>Treponemataceae</taxon>
        <taxon>Treponema</taxon>
    </lineage>
</organism>
<gene>
    <name type="ordered locus">TP_0070</name>
</gene>
<keyword id="KW-1003">Cell membrane</keyword>
<keyword id="KW-0472">Membrane</keyword>
<keyword id="KW-1185">Reference proteome</keyword>
<keyword id="KW-0812">Transmembrane</keyword>
<keyword id="KW-1133">Transmembrane helix</keyword>